<sequence>MVVTRGDKFAGSSLACKSMIGANKMSGSHLHEVNNSRSHFPQTNWLKVAKAFECIPSLNKFMGSNFLYSLESQKLGRDREMAARSIENIAPVTVQTLARPQIEKAWCTLINLSINNTYLRPGITPAIDNDSTSRTSSTKGSTFKVTSNADGSFCAHNHPEHSQRSVRGTAKSIDSFSSSSVGDNKIIIDKVPRVNYEVRDSVTVTNGMEMPPIKNSAQLARPVEPREVSLGEIDYDDIMEIIDVDQIAMEHCPSTCTKQPSVSKFVDIFTSRREEEQGLPPEICSNCSHGIKLGLCPEASTHVEQMKDTLLAISNEILDNTYDLGPDHVEQLHQKRLLLKKQIQQLEILIHNKERKKSQCLVSIPSHNTQYETPQTTNLEVVYGQTDSPTHVKEQGRCVTDNWNMPRDYLVSKERYDISSGSEEREQSVSEVIDVTDTESSNDKKWTSSDFPWTKNLEVYNKLVFGNHSFRPNQREIINATMSGCDVFVLMPTGGGKSLTYQLPALLCAGITLVISPLVSLIQDQIMNLLQTNISAASLSAGMEWAEQLEILQELSSEKSKYKLLYVTPEKVAKSESLLRHLEILNSRSLLARFVIDEAHCVSQWGHDFRPDYQGLGVLKQKFPNIPMLALTATATTSVKEDVVQALGLVNCVVFRQSFNRPNLWYSVVPKTNKCLEDIDKFIRENHFDECGIIYCLSRMDCEKVTEALRVFGHKAAFYHGSMDPGKRAFVQKQWSKDEINIICATVAFGMGINKPDVRFVIHHSLPKSIEGYHQECGRAGRDGQRSSCVLYYSYTDYIRVKHMISQGGLGQGQMKMGYNCKASSGRMLETNTENLLRMVSYCENEVDCRRFLQLVHLGEKFDSTNCKNTCDNCSSSKILIDKDVTVIARQLVALVKLTGERFSSAHIVEIYRGSLNQSVKRNRQDTLHLHGAGKHLTKSEASRILHYLVTEDILAEGVKKSELYGSVSSLLKVNRSKAASLLSGGQSITMRFPSTIKVSKQSKSTANPAKVPLKQTTLPMAKAAPQDSNLSGILLTALKNLRTDIVKESPDLVMAYHIFGNATLKEISKRLPRTKEELLDINGLGKAKVSKYGDRLLETIDSTINDHYKTRPGSGKRRRDENVNPNVAEDDDPDWSASQSHKKVVKNKK</sequence>
<reference key="1">
    <citation type="journal article" date="2000" name="Nucleic Acids Res.">
        <title>Molecular characterisation of RecQ homologues in Arabidopsis thaliana.</title>
        <authorList>
            <person name="Hartung F."/>
            <person name="Plchova H."/>
            <person name="Puchta H."/>
        </authorList>
    </citation>
    <scope>NUCLEOTIDE SEQUENCE [MRNA]</scope>
    <scope>TISSUE SPECIFICITY</scope>
    <source>
        <strain>cv. Columbia</strain>
        <tissue>Flower</tissue>
    </source>
</reference>
<reference key="2">
    <citation type="journal article" date="2000" name="Nature">
        <title>Sequence and analysis of chromosome 1 of the plant Arabidopsis thaliana.</title>
        <authorList>
            <person name="Theologis A."/>
            <person name="Ecker J.R."/>
            <person name="Palm C.J."/>
            <person name="Federspiel N.A."/>
            <person name="Kaul S."/>
            <person name="White O."/>
            <person name="Alonso J."/>
            <person name="Altafi H."/>
            <person name="Araujo R."/>
            <person name="Bowman C.L."/>
            <person name="Brooks S.Y."/>
            <person name="Buehler E."/>
            <person name="Chan A."/>
            <person name="Chao Q."/>
            <person name="Chen H."/>
            <person name="Cheuk R.F."/>
            <person name="Chin C.W."/>
            <person name="Chung M.K."/>
            <person name="Conn L."/>
            <person name="Conway A.B."/>
            <person name="Conway A.R."/>
            <person name="Creasy T.H."/>
            <person name="Dewar K."/>
            <person name="Dunn P."/>
            <person name="Etgu P."/>
            <person name="Feldblyum T.V."/>
            <person name="Feng J.-D."/>
            <person name="Fong B."/>
            <person name="Fujii C.Y."/>
            <person name="Gill J.E."/>
            <person name="Goldsmith A.D."/>
            <person name="Haas B."/>
            <person name="Hansen N.F."/>
            <person name="Hughes B."/>
            <person name="Huizar L."/>
            <person name="Hunter J.L."/>
            <person name="Jenkins J."/>
            <person name="Johnson-Hopson C."/>
            <person name="Khan S."/>
            <person name="Khaykin E."/>
            <person name="Kim C.J."/>
            <person name="Koo H.L."/>
            <person name="Kremenetskaia I."/>
            <person name="Kurtz D.B."/>
            <person name="Kwan A."/>
            <person name="Lam B."/>
            <person name="Langin-Hooper S."/>
            <person name="Lee A."/>
            <person name="Lee J.M."/>
            <person name="Lenz C.A."/>
            <person name="Li J.H."/>
            <person name="Li Y.-P."/>
            <person name="Lin X."/>
            <person name="Liu S.X."/>
            <person name="Liu Z.A."/>
            <person name="Luros J.S."/>
            <person name="Maiti R."/>
            <person name="Marziali A."/>
            <person name="Militscher J."/>
            <person name="Miranda M."/>
            <person name="Nguyen M."/>
            <person name="Nierman W.C."/>
            <person name="Osborne B.I."/>
            <person name="Pai G."/>
            <person name="Peterson J."/>
            <person name="Pham P.K."/>
            <person name="Rizzo M."/>
            <person name="Rooney T."/>
            <person name="Rowley D."/>
            <person name="Sakano H."/>
            <person name="Salzberg S.L."/>
            <person name="Schwartz J.R."/>
            <person name="Shinn P."/>
            <person name="Southwick A.M."/>
            <person name="Sun H."/>
            <person name="Tallon L.J."/>
            <person name="Tambunga G."/>
            <person name="Toriumi M.J."/>
            <person name="Town C.D."/>
            <person name="Utterback T."/>
            <person name="Van Aken S."/>
            <person name="Vaysberg M."/>
            <person name="Vysotskaia V.S."/>
            <person name="Walker M."/>
            <person name="Wu D."/>
            <person name="Yu G."/>
            <person name="Fraser C.M."/>
            <person name="Venter J.C."/>
            <person name="Davis R.W."/>
        </authorList>
    </citation>
    <scope>NUCLEOTIDE SEQUENCE [LARGE SCALE GENOMIC DNA]</scope>
    <source>
        <strain>cv. Columbia</strain>
    </source>
</reference>
<reference key="3">
    <citation type="journal article" date="2017" name="Plant J.">
        <title>Araport11: a complete reannotation of the Arabidopsis thaliana reference genome.</title>
        <authorList>
            <person name="Cheng C.Y."/>
            <person name="Krishnakumar V."/>
            <person name="Chan A.P."/>
            <person name="Thibaud-Nissen F."/>
            <person name="Schobel S."/>
            <person name="Town C.D."/>
        </authorList>
    </citation>
    <scope>GENOME REANNOTATION</scope>
    <source>
        <strain>cv. Columbia</strain>
    </source>
</reference>
<reference key="4">
    <citation type="journal article" date="2003" name="Plant Mol. Biol.">
        <title>Arabidopsis RecQsim, a plant-specific member of the RecQ helicase family, can suppress the MMS hypersensitivity of the yeast sgs1 mutant.</title>
        <authorList>
            <person name="Bagherieh-Najjar M.B."/>
            <person name="de Vries O.M."/>
            <person name="Kroon J.T."/>
            <person name="Wright E.L."/>
            <person name="Elborough K.M."/>
            <person name="Hille J."/>
            <person name="Dijkwel P.P."/>
        </authorList>
    </citation>
    <scope>TISSUE SPECIFICITY</scope>
    <scope>INDUCTION BY ABIOTIC STRESSES</scope>
</reference>
<reference key="5">
    <citation type="journal article" date="2006" name="J. Plant Physiol.">
        <title>The RecQ gene family in plants.</title>
        <authorList>
            <person name="Hartung F."/>
            <person name="Puchta H."/>
        </authorList>
    </citation>
    <scope>GENE FAMILY</scope>
    <scope>NOMENCLATURE</scope>
</reference>
<reference key="6">
    <citation type="journal article" date="2007" name="Proc. Natl. Acad. Sci. U.S.A.">
        <title>Two closely related RecQ helicases have antagonistic roles in homologous recombination and DNA repair in Arabidopsis thaliana.</title>
        <authorList>
            <person name="Hartung F."/>
            <person name="Suer S."/>
            <person name="Puchta H."/>
        </authorList>
    </citation>
    <scope>FUNCTION</scope>
    <scope>DISRUPTION PHENOTYPE</scope>
</reference>
<reference key="7">
    <citation type="journal article" date="2013" name="PLoS ONE">
        <title>Genome-wide comparative in silico analysis of the RNA helicase gene family in Zea mays and Glycine max: a comparison with Arabidopsis and Oryza sativa.</title>
        <authorList>
            <person name="Xu R."/>
            <person name="Zhang S."/>
            <person name="Huang J."/>
            <person name="Zheng C."/>
        </authorList>
    </citation>
    <scope>GENE FAMILY</scope>
</reference>
<feature type="chain" id="PRO_0000394530" description="ATP-dependent DNA helicase Q-like 4B">
    <location>
        <begin position="1"/>
        <end position="1150"/>
    </location>
</feature>
<feature type="domain" description="Helicase ATP-binding" evidence="5">
    <location>
        <begin position="478"/>
        <end position="653"/>
    </location>
</feature>
<feature type="domain" description="Helicase C-terminal" evidence="6">
    <location>
        <begin position="678"/>
        <end position="823"/>
    </location>
</feature>
<feature type="domain" description="HRDC" evidence="4">
    <location>
        <begin position="1029"/>
        <end position="1111"/>
    </location>
</feature>
<feature type="region of interest" description="Disordered" evidence="7">
    <location>
        <begin position="124"/>
        <end position="143"/>
    </location>
</feature>
<feature type="region of interest" description="Disordered" evidence="7">
    <location>
        <begin position="154"/>
        <end position="179"/>
    </location>
</feature>
<feature type="region of interest" description="Disordered" evidence="7">
    <location>
        <begin position="416"/>
        <end position="446"/>
    </location>
</feature>
<feature type="region of interest" description="Disordered" evidence="7">
    <location>
        <begin position="1106"/>
        <end position="1150"/>
    </location>
</feature>
<feature type="coiled-coil region" evidence="3">
    <location>
        <begin position="327"/>
        <end position="361"/>
    </location>
</feature>
<feature type="short sequence motif" description="DEAH box">
    <location>
        <begin position="597"/>
        <end position="600"/>
    </location>
</feature>
<feature type="compositionally biased region" description="Low complexity" evidence="7">
    <location>
        <begin position="132"/>
        <end position="142"/>
    </location>
</feature>
<feature type="compositionally biased region" description="Basic and acidic residues" evidence="7">
    <location>
        <begin position="416"/>
        <end position="428"/>
    </location>
</feature>
<feature type="compositionally biased region" description="Basic residues" evidence="7">
    <location>
        <begin position="1141"/>
        <end position="1150"/>
    </location>
</feature>
<feature type="binding site" evidence="5">
    <location>
        <begin position="491"/>
        <end position="498"/>
    </location>
    <ligand>
        <name>ATP</name>
        <dbReference type="ChEBI" id="CHEBI:30616"/>
    </ligand>
</feature>
<accession>Q9FT70</accession>
<accession>Q9C959</accession>
<comment type="function">
    <text evidence="2 10">3'-5' DNA helicase that may play a role in the repair of DNA (By similarity). Required to promote but not to suppress crossovers.</text>
</comment>
<comment type="catalytic activity">
    <reaction evidence="2">
        <text>Couples ATP hydrolysis with the unwinding of duplex DNA by translocating in the 3'-5' direction.</text>
        <dbReference type="EC" id="5.6.2.4"/>
    </reaction>
</comment>
<comment type="catalytic activity">
    <reaction evidence="2">
        <text>ATP + H2O = ADP + phosphate + H(+)</text>
        <dbReference type="Rhea" id="RHEA:13065"/>
        <dbReference type="ChEBI" id="CHEBI:15377"/>
        <dbReference type="ChEBI" id="CHEBI:15378"/>
        <dbReference type="ChEBI" id="CHEBI:30616"/>
        <dbReference type="ChEBI" id="CHEBI:43474"/>
        <dbReference type="ChEBI" id="CHEBI:456216"/>
    </reaction>
</comment>
<comment type="cofactor">
    <cofactor evidence="1">
        <name>Mg(2+)</name>
        <dbReference type="ChEBI" id="CHEBI:18420"/>
    </cofactor>
    <cofactor evidence="1">
        <name>Mn(2+)</name>
        <dbReference type="ChEBI" id="CHEBI:29035"/>
    </cofactor>
</comment>
<comment type="subcellular location">
    <subcellularLocation>
        <location evidence="1">Nucleus</location>
    </subcellularLocation>
</comment>
<comment type="tissue specificity">
    <text evidence="8 9">Mostly expressed in roots, seedlings, shoots, shoot apical mersitem, flowers, and siliques.</text>
</comment>
<comment type="induction">
    <text evidence="9">Repressed by cold.</text>
</comment>
<comment type="disruption phenotype">
    <text evidence="10">Not mutagen-sensitive, and impaired in hyperrecombination (HR).</text>
</comment>
<comment type="similarity">
    <text evidence="11">Belongs to the helicase family. RecQ subfamily.</text>
</comment>
<comment type="sequence caution" evidence="11">
    <conflict type="erroneous gene model prediction">
        <sequence resource="EMBL-CDS" id="AAG51646"/>
    </conflict>
</comment>
<comment type="sequence caution" evidence="11">
    <conflict type="frameshift">
        <sequence resource="EMBL-CDS" id="AAG51646"/>
    </conflict>
</comment>
<keyword id="KW-0067">ATP-binding</keyword>
<keyword id="KW-0175">Coiled coil</keyword>
<keyword id="KW-0238">DNA-binding</keyword>
<keyword id="KW-0347">Helicase</keyword>
<keyword id="KW-0378">Hydrolase</keyword>
<keyword id="KW-0413">Isomerase</keyword>
<keyword id="KW-0460">Magnesium</keyword>
<keyword id="KW-0464">Manganese</keyword>
<keyword id="KW-0479">Metal-binding</keyword>
<keyword id="KW-0547">Nucleotide-binding</keyword>
<keyword id="KW-0539">Nucleus</keyword>
<keyword id="KW-1185">Reference proteome</keyword>
<protein>
    <recommendedName>
        <fullName>ATP-dependent DNA helicase Q-like 4B</fullName>
        <ecNumber evidence="2">5.6.2.4</ecNumber>
    </recommendedName>
    <alternativeName>
        <fullName evidence="11">DNA 3'-5' helicase RecQ4B</fullName>
    </alternativeName>
    <alternativeName>
        <fullName>RecQ-like protein 4B</fullName>
        <shortName>AtRecQ4B</shortName>
        <shortName>AtRecQl4B</shortName>
    </alternativeName>
</protein>
<name>RQL4B_ARATH</name>
<proteinExistence type="evidence at transcript level"/>
<dbReference type="EC" id="5.6.2.4" evidence="2"/>
<dbReference type="EMBL" id="AJ404474">
    <property type="protein sequence ID" value="CAC14869.1"/>
    <property type="molecule type" value="mRNA"/>
</dbReference>
<dbReference type="EMBL" id="AC018908">
    <property type="protein sequence ID" value="AAG51646.1"/>
    <property type="status" value="ALT_SEQ"/>
    <property type="molecule type" value="Genomic_DNA"/>
</dbReference>
<dbReference type="EMBL" id="CP002684">
    <property type="protein sequence ID" value="AEE33749.1"/>
    <property type="molecule type" value="Genomic_DNA"/>
</dbReference>
<dbReference type="PIR" id="G96634">
    <property type="entry name" value="G96634"/>
</dbReference>
<dbReference type="RefSeq" id="NP_176289.7">
    <property type="nucleotide sequence ID" value="NM_104773.7"/>
</dbReference>
<dbReference type="SMR" id="Q9FT70"/>
<dbReference type="FunCoup" id="Q9FT70">
    <property type="interactions" value="530"/>
</dbReference>
<dbReference type="STRING" id="3702.Q9FT70"/>
<dbReference type="iPTMnet" id="Q9FT70"/>
<dbReference type="PaxDb" id="3702-AT1G60930.1"/>
<dbReference type="ProteomicsDB" id="228235"/>
<dbReference type="GeneID" id="842384"/>
<dbReference type="KEGG" id="ath:AT1G60930"/>
<dbReference type="Araport" id="AT1G60930"/>
<dbReference type="TAIR" id="AT1G60930"/>
<dbReference type="eggNOG" id="KOG0351">
    <property type="taxonomic scope" value="Eukaryota"/>
</dbReference>
<dbReference type="HOGENOM" id="CLU_276670_0_0_1"/>
<dbReference type="InParanoid" id="Q9FT70"/>
<dbReference type="PhylomeDB" id="Q9FT70"/>
<dbReference type="PRO" id="PR:Q9FT70"/>
<dbReference type="Proteomes" id="UP000006548">
    <property type="component" value="Chromosome 1"/>
</dbReference>
<dbReference type="ExpressionAtlas" id="Q9FT70">
    <property type="expression patterns" value="baseline and differential"/>
</dbReference>
<dbReference type="GO" id="GO:0005634">
    <property type="term" value="C:nucleus"/>
    <property type="evidence" value="ECO:0007669"/>
    <property type="project" value="UniProtKB-SubCell"/>
</dbReference>
<dbReference type="GO" id="GO:0043138">
    <property type="term" value="F:3'-5' DNA helicase activity"/>
    <property type="evidence" value="ECO:0007669"/>
    <property type="project" value="InterPro"/>
</dbReference>
<dbReference type="GO" id="GO:0005524">
    <property type="term" value="F:ATP binding"/>
    <property type="evidence" value="ECO:0007669"/>
    <property type="project" value="UniProtKB-KW"/>
</dbReference>
<dbReference type="GO" id="GO:0016887">
    <property type="term" value="F:ATP hydrolysis activity"/>
    <property type="evidence" value="ECO:0007669"/>
    <property type="project" value="RHEA"/>
</dbReference>
<dbReference type="GO" id="GO:0003677">
    <property type="term" value="F:DNA binding"/>
    <property type="evidence" value="ECO:0007669"/>
    <property type="project" value="UniProtKB-KW"/>
</dbReference>
<dbReference type="GO" id="GO:0046872">
    <property type="term" value="F:metal ion binding"/>
    <property type="evidence" value="ECO:0007669"/>
    <property type="project" value="UniProtKB-KW"/>
</dbReference>
<dbReference type="GO" id="GO:0070417">
    <property type="term" value="P:cellular response to cold"/>
    <property type="evidence" value="ECO:0000270"/>
    <property type="project" value="UniProtKB"/>
</dbReference>
<dbReference type="GO" id="GO:0006310">
    <property type="term" value="P:DNA recombination"/>
    <property type="evidence" value="ECO:0000315"/>
    <property type="project" value="UniProtKB"/>
</dbReference>
<dbReference type="GO" id="GO:0006281">
    <property type="term" value="P:DNA repair"/>
    <property type="evidence" value="ECO:0007669"/>
    <property type="project" value="InterPro"/>
</dbReference>
<dbReference type="GO" id="GO:0006260">
    <property type="term" value="P:DNA replication"/>
    <property type="evidence" value="ECO:0007669"/>
    <property type="project" value="InterPro"/>
</dbReference>
<dbReference type="CDD" id="cd17920">
    <property type="entry name" value="DEXHc_RecQ"/>
    <property type="match status" value="1"/>
</dbReference>
<dbReference type="CDD" id="cd18794">
    <property type="entry name" value="SF2_C_RecQ"/>
    <property type="match status" value="1"/>
</dbReference>
<dbReference type="FunFam" id="3.40.50.300:FF:000296">
    <property type="entry name" value="ATP-dependent DNA helicase RecQ"/>
    <property type="match status" value="1"/>
</dbReference>
<dbReference type="FunFam" id="3.40.50.300:FF:000340">
    <property type="entry name" value="Bloom syndrome, RecQ helicase"/>
    <property type="match status" value="1"/>
</dbReference>
<dbReference type="Gene3D" id="1.10.150.80">
    <property type="entry name" value="HRDC domain"/>
    <property type="match status" value="1"/>
</dbReference>
<dbReference type="Gene3D" id="3.40.50.300">
    <property type="entry name" value="P-loop containing nucleotide triphosphate hydrolases"/>
    <property type="match status" value="2"/>
</dbReference>
<dbReference type="Gene3D" id="1.10.10.10">
    <property type="entry name" value="Winged helix-like DNA-binding domain superfamily/Winged helix DNA-binding domain"/>
    <property type="match status" value="1"/>
</dbReference>
<dbReference type="InterPro" id="IPR011545">
    <property type="entry name" value="DEAD/DEAH_box_helicase_dom"/>
</dbReference>
<dbReference type="InterPro" id="IPR002464">
    <property type="entry name" value="DNA/RNA_helicase_DEAH_CS"/>
</dbReference>
<dbReference type="InterPro" id="IPR004589">
    <property type="entry name" value="DNA_helicase_ATP-dep_RecQ"/>
</dbReference>
<dbReference type="InterPro" id="IPR014001">
    <property type="entry name" value="Helicase_ATP-bd"/>
</dbReference>
<dbReference type="InterPro" id="IPR001650">
    <property type="entry name" value="Helicase_C-like"/>
</dbReference>
<dbReference type="InterPro" id="IPR010997">
    <property type="entry name" value="HRDC-like_sf"/>
</dbReference>
<dbReference type="InterPro" id="IPR002121">
    <property type="entry name" value="HRDC_dom"/>
</dbReference>
<dbReference type="InterPro" id="IPR044876">
    <property type="entry name" value="HRDC_dom_sf"/>
</dbReference>
<dbReference type="InterPro" id="IPR027417">
    <property type="entry name" value="P-loop_NTPase"/>
</dbReference>
<dbReference type="InterPro" id="IPR032284">
    <property type="entry name" value="RecQ_Zn-bd"/>
</dbReference>
<dbReference type="InterPro" id="IPR001763">
    <property type="entry name" value="Rhodanese-like_dom"/>
</dbReference>
<dbReference type="InterPro" id="IPR018982">
    <property type="entry name" value="RQC_domain"/>
</dbReference>
<dbReference type="InterPro" id="IPR036388">
    <property type="entry name" value="WH-like_DNA-bd_sf"/>
</dbReference>
<dbReference type="NCBIfam" id="TIGR00614">
    <property type="entry name" value="recQ_fam"/>
    <property type="match status" value="1"/>
</dbReference>
<dbReference type="PANTHER" id="PTHR13710:SF156">
    <property type="entry name" value="ATP-DEPENDENT DNA HELICASE Q-LIKE 4B"/>
    <property type="match status" value="1"/>
</dbReference>
<dbReference type="PANTHER" id="PTHR13710">
    <property type="entry name" value="DNA HELICASE RECQ FAMILY MEMBER"/>
    <property type="match status" value="1"/>
</dbReference>
<dbReference type="Pfam" id="PF00270">
    <property type="entry name" value="DEAD"/>
    <property type="match status" value="1"/>
</dbReference>
<dbReference type="Pfam" id="PF00271">
    <property type="entry name" value="Helicase_C"/>
    <property type="match status" value="1"/>
</dbReference>
<dbReference type="Pfam" id="PF00570">
    <property type="entry name" value="HRDC"/>
    <property type="match status" value="1"/>
</dbReference>
<dbReference type="Pfam" id="PF16124">
    <property type="entry name" value="RecQ_Zn_bind"/>
    <property type="match status" value="1"/>
</dbReference>
<dbReference type="Pfam" id="PF09382">
    <property type="entry name" value="RQC"/>
    <property type="match status" value="1"/>
</dbReference>
<dbReference type="SMART" id="SM00487">
    <property type="entry name" value="DEXDc"/>
    <property type="match status" value="1"/>
</dbReference>
<dbReference type="SMART" id="SM00490">
    <property type="entry name" value="HELICc"/>
    <property type="match status" value="1"/>
</dbReference>
<dbReference type="SMART" id="SM00956">
    <property type="entry name" value="RQC"/>
    <property type="match status" value="1"/>
</dbReference>
<dbReference type="SUPFAM" id="SSF47819">
    <property type="entry name" value="HRDC-like"/>
    <property type="match status" value="1"/>
</dbReference>
<dbReference type="SUPFAM" id="SSF52540">
    <property type="entry name" value="P-loop containing nucleoside triphosphate hydrolases"/>
    <property type="match status" value="2"/>
</dbReference>
<dbReference type="PROSITE" id="PS00690">
    <property type="entry name" value="DEAH_ATP_HELICASE"/>
    <property type="match status" value="1"/>
</dbReference>
<dbReference type="PROSITE" id="PS51192">
    <property type="entry name" value="HELICASE_ATP_BIND_1"/>
    <property type="match status" value="1"/>
</dbReference>
<dbReference type="PROSITE" id="PS51194">
    <property type="entry name" value="HELICASE_CTER"/>
    <property type="match status" value="1"/>
</dbReference>
<dbReference type="PROSITE" id="PS50967">
    <property type="entry name" value="HRDC"/>
    <property type="match status" value="1"/>
</dbReference>
<evidence type="ECO:0000250" key="1"/>
<evidence type="ECO:0000250" key="2">
    <source>
        <dbReference type="UniProtKB" id="Q9FT73"/>
    </source>
</evidence>
<evidence type="ECO:0000255" key="3"/>
<evidence type="ECO:0000255" key="4">
    <source>
        <dbReference type="PROSITE-ProRule" id="PRU00328"/>
    </source>
</evidence>
<evidence type="ECO:0000255" key="5">
    <source>
        <dbReference type="PROSITE-ProRule" id="PRU00541"/>
    </source>
</evidence>
<evidence type="ECO:0000255" key="6">
    <source>
        <dbReference type="PROSITE-ProRule" id="PRU00542"/>
    </source>
</evidence>
<evidence type="ECO:0000256" key="7">
    <source>
        <dbReference type="SAM" id="MobiDB-lite"/>
    </source>
</evidence>
<evidence type="ECO:0000269" key="8">
    <source>
    </source>
</evidence>
<evidence type="ECO:0000269" key="9">
    <source>
    </source>
</evidence>
<evidence type="ECO:0000269" key="10">
    <source>
    </source>
</evidence>
<evidence type="ECO:0000305" key="11"/>
<gene>
    <name type="primary">RECQL4B</name>
    <name type="synonym">RECQ4B</name>
    <name type="synonym">RQL4B</name>
    <name type="ordered locus">At1g60930</name>
    <name type="ORF">T7P1.7</name>
</gene>
<organism>
    <name type="scientific">Arabidopsis thaliana</name>
    <name type="common">Mouse-ear cress</name>
    <dbReference type="NCBI Taxonomy" id="3702"/>
    <lineage>
        <taxon>Eukaryota</taxon>
        <taxon>Viridiplantae</taxon>
        <taxon>Streptophyta</taxon>
        <taxon>Embryophyta</taxon>
        <taxon>Tracheophyta</taxon>
        <taxon>Spermatophyta</taxon>
        <taxon>Magnoliopsida</taxon>
        <taxon>eudicotyledons</taxon>
        <taxon>Gunneridae</taxon>
        <taxon>Pentapetalae</taxon>
        <taxon>rosids</taxon>
        <taxon>malvids</taxon>
        <taxon>Brassicales</taxon>
        <taxon>Brassicaceae</taxon>
        <taxon>Camelineae</taxon>
        <taxon>Arabidopsis</taxon>
    </lineage>
</organism>